<keyword id="KW-1003">Cell membrane</keyword>
<keyword id="KW-0342">GTP-binding</keyword>
<keyword id="KW-0449">Lipoprotein</keyword>
<keyword id="KW-0472">Membrane</keyword>
<keyword id="KW-0488">Methylation</keyword>
<keyword id="KW-0547">Nucleotide-binding</keyword>
<keyword id="KW-0636">Prenylation</keyword>
<keyword id="KW-1185">Reference proteome</keyword>
<protein>
    <recommendedName>
        <fullName>Rho-related protein racB</fullName>
    </recommendedName>
</protein>
<gene>
    <name type="primary">racB</name>
    <name type="ORF">DDB_G0279605</name>
</gene>
<sequence>MQSIKLVVVGDGAVGKTCLLISYTSNSFPTEYVPTVFDNYSANVMVDNKTVSLGLWDTAGQEDYDRLRPLSYPQTDVFLICFAIISQTSYTNVKSKWWPEVTHHCPNCTIILVGTKCDLREDKESLEKLREKHQQPLTFQQGEQMAKEIKAFCYMECSALTQKGLKQVFDEAIKAVIFPDRDKATNKKNSKCSIL</sequence>
<feature type="chain" id="PRO_0000198899" description="Rho-related protein racB">
    <location>
        <begin position="1"/>
        <end position="192"/>
    </location>
</feature>
<feature type="propeptide" id="PRO_0000281249" description="Removed in mature form" evidence="1">
    <location>
        <begin position="193"/>
        <end position="195"/>
    </location>
</feature>
<feature type="short sequence motif" description="Effector region" evidence="2">
    <location>
        <begin position="32"/>
        <end position="40"/>
    </location>
</feature>
<feature type="binding site" evidence="1">
    <location>
        <begin position="10"/>
        <end position="17"/>
    </location>
    <ligand>
        <name>GTP</name>
        <dbReference type="ChEBI" id="CHEBI:37565"/>
    </ligand>
</feature>
<feature type="binding site" evidence="1">
    <location>
        <begin position="57"/>
        <end position="61"/>
    </location>
    <ligand>
        <name>GTP</name>
        <dbReference type="ChEBI" id="CHEBI:37565"/>
    </ligand>
</feature>
<feature type="binding site" evidence="1">
    <location>
        <begin position="115"/>
        <end position="118"/>
    </location>
    <ligand>
        <name>GTP</name>
        <dbReference type="ChEBI" id="CHEBI:37565"/>
    </ligand>
</feature>
<feature type="modified residue" description="Cysteine methyl ester" evidence="1">
    <location>
        <position position="192"/>
    </location>
</feature>
<feature type="lipid moiety-binding region" description="S-geranylgeranyl cysteine" evidence="1">
    <location>
        <position position="192"/>
    </location>
</feature>
<comment type="subunit">
    <text evidence="3">Interacts with pakB.</text>
</comment>
<comment type="subcellular location">
    <subcellularLocation>
        <location evidence="4">Cell membrane</location>
        <topology evidence="4">Lipid-anchor</topology>
        <orientation evidence="4">Cytoplasmic side</orientation>
    </subcellularLocation>
</comment>
<comment type="similarity">
    <text evidence="4">Belongs to the small GTPase superfamily. Rho family.</text>
</comment>
<name>RACB_DICDI</name>
<reference key="1">
    <citation type="journal article" date="1993" name="Gene">
        <title>Cloning and characterization of seven novel Dictyostelium discoideum rac-related genes belonging to the rho family of GTPases.</title>
        <authorList>
            <person name="Bush J.M. IV"/>
            <person name="Franek K."/>
            <person name="Cardelli J.A."/>
        </authorList>
    </citation>
    <scope>NUCLEOTIDE SEQUENCE [MRNA]</scope>
    <source>
        <strain>AX3</strain>
    </source>
</reference>
<reference key="2">
    <citation type="journal article" date="2005" name="Nature">
        <title>The genome of the social amoeba Dictyostelium discoideum.</title>
        <authorList>
            <person name="Eichinger L."/>
            <person name="Pachebat J.A."/>
            <person name="Gloeckner G."/>
            <person name="Rajandream M.A."/>
            <person name="Sucgang R."/>
            <person name="Berriman M."/>
            <person name="Song J."/>
            <person name="Olsen R."/>
            <person name="Szafranski K."/>
            <person name="Xu Q."/>
            <person name="Tunggal B."/>
            <person name="Kummerfeld S."/>
            <person name="Madera M."/>
            <person name="Konfortov B.A."/>
            <person name="Rivero F."/>
            <person name="Bankier A.T."/>
            <person name="Lehmann R."/>
            <person name="Hamlin N."/>
            <person name="Davies R."/>
            <person name="Gaudet P."/>
            <person name="Fey P."/>
            <person name="Pilcher K."/>
            <person name="Chen G."/>
            <person name="Saunders D."/>
            <person name="Sodergren E.J."/>
            <person name="Davis P."/>
            <person name="Kerhornou A."/>
            <person name="Nie X."/>
            <person name="Hall N."/>
            <person name="Anjard C."/>
            <person name="Hemphill L."/>
            <person name="Bason N."/>
            <person name="Farbrother P."/>
            <person name="Desany B."/>
            <person name="Just E."/>
            <person name="Morio T."/>
            <person name="Rost R."/>
            <person name="Churcher C.M."/>
            <person name="Cooper J."/>
            <person name="Haydock S."/>
            <person name="van Driessche N."/>
            <person name="Cronin A."/>
            <person name="Goodhead I."/>
            <person name="Muzny D.M."/>
            <person name="Mourier T."/>
            <person name="Pain A."/>
            <person name="Lu M."/>
            <person name="Harper D."/>
            <person name="Lindsay R."/>
            <person name="Hauser H."/>
            <person name="James K.D."/>
            <person name="Quiles M."/>
            <person name="Madan Babu M."/>
            <person name="Saito T."/>
            <person name="Buchrieser C."/>
            <person name="Wardroper A."/>
            <person name="Felder M."/>
            <person name="Thangavelu M."/>
            <person name="Johnson D."/>
            <person name="Knights A."/>
            <person name="Loulseged H."/>
            <person name="Mungall K.L."/>
            <person name="Oliver K."/>
            <person name="Price C."/>
            <person name="Quail M.A."/>
            <person name="Urushihara H."/>
            <person name="Hernandez J."/>
            <person name="Rabbinowitsch E."/>
            <person name="Steffen D."/>
            <person name="Sanders M."/>
            <person name="Ma J."/>
            <person name="Kohara Y."/>
            <person name="Sharp S."/>
            <person name="Simmonds M.N."/>
            <person name="Spiegler S."/>
            <person name="Tivey A."/>
            <person name="Sugano S."/>
            <person name="White B."/>
            <person name="Walker D."/>
            <person name="Woodward J.R."/>
            <person name="Winckler T."/>
            <person name="Tanaka Y."/>
            <person name="Shaulsky G."/>
            <person name="Schleicher M."/>
            <person name="Weinstock G.M."/>
            <person name="Rosenthal A."/>
            <person name="Cox E.C."/>
            <person name="Chisholm R.L."/>
            <person name="Gibbs R.A."/>
            <person name="Loomis W.F."/>
            <person name="Platzer M."/>
            <person name="Kay R.R."/>
            <person name="Williams J.G."/>
            <person name="Dear P.H."/>
            <person name="Noegel A.A."/>
            <person name="Barrell B.G."/>
            <person name="Kuspa A."/>
        </authorList>
    </citation>
    <scope>NUCLEOTIDE SEQUENCE [LARGE SCALE GENOMIC DNA]</scope>
    <source>
        <strain>AX4</strain>
    </source>
</reference>
<reference key="3">
    <citation type="journal article" date="2001" name="Nucleic Acids Res.">
        <title>The Dictyostelium discoideum family of Rho-related proteins.</title>
        <authorList>
            <person name="Rivero F."/>
            <person name="Dislich H."/>
            <person name="Gloeckner G."/>
            <person name="Noegel A.A."/>
        </authorList>
    </citation>
    <scope>NUCLEOTIDE SEQUENCE [GENOMIC DNA] OF 16-195</scope>
    <source>
        <strain>AX4</strain>
    </source>
</reference>
<reference key="4">
    <citation type="journal article" date="2005" name="Mol. Biol. Cell">
        <title>Cellular distribution and functions of wild-type and constitutively activated Dictyostelium PakB.</title>
        <authorList>
            <person name="de la Roche M."/>
            <person name="Mahasneh A."/>
            <person name="Lee S.-F."/>
            <person name="Rivero F."/>
            <person name="Cote G.P."/>
        </authorList>
    </citation>
    <scope>INTERACTION WITH PAKB</scope>
</reference>
<evidence type="ECO:0000250" key="1"/>
<evidence type="ECO:0000255" key="2"/>
<evidence type="ECO:0000269" key="3">
    <source>
    </source>
</evidence>
<evidence type="ECO:0000305" key="4"/>
<dbReference type="EMBL" id="L11592">
    <property type="protein sequence ID" value="AAC37388.1"/>
    <property type="molecule type" value="mRNA"/>
</dbReference>
<dbReference type="EMBL" id="AAFI02000032">
    <property type="protein sequence ID" value="EAL67577.1"/>
    <property type="molecule type" value="Genomic_DNA"/>
</dbReference>
<dbReference type="EMBL" id="AF310887">
    <property type="protein sequence ID" value="AAG45116.1"/>
    <property type="molecule type" value="Genomic_DNA"/>
</dbReference>
<dbReference type="RefSeq" id="XP_641575.1">
    <property type="nucleotide sequence ID" value="XM_636483.1"/>
</dbReference>
<dbReference type="SMR" id="P34148"/>
<dbReference type="FunCoup" id="P34148">
    <property type="interactions" value="61"/>
</dbReference>
<dbReference type="IntAct" id="P34148">
    <property type="interactions" value="2"/>
</dbReference>
<dbReference type="STRING" id="44689.P34148"/>
<dbReference type="PaxDb" id="44689-DDB0214824"/>
<dbReference type="EnsemblProtists" id="EAL67577">
    <property type="protein sequence ID" value="EAL67577"/>
    <property type="gene ID" value="DDB_G0279605"/>
</dbReference>
<dbReference type="GeneID" id="8622150"/>
<dbReference type="KEGG" id="ddi:DDB_G0279605"/>
<dbReference type="dictyBase" id="DDB_G0279605">
    <property type="gene designation" value="racB"/>
</dbReference>
<dbReference type="VEuPathDB" id="AmoebaDB:DDB_G0279605"/>
<dbReference type="eggNOG" id="KOG0393">
    <property type="taxonomic scope" value="Eukaryota"/>
</dbReference>
<dbReference type="HOGENOM" id="CLU_041217_21_3_1"/>
<dbReference type="InParanoid" id="P34148"/>
<dbReference type="OMA" id="EERPQMA"/>
<dbReference type="PhylomeDB" id="P34148"/>
<dbReference type="Reactome" id="R-DDI-6798695">
    <property type="pathway name" value="Neutrophil degranulation"/>
</dbReference>
<dbReference type="Reactome" id="R-DDI-9013404">
    <property type="pathway name" value="RAC2 GTPase cycle"/>
</dbReference>
<dbReference type="Reactome" id="R-DDI-9013407">
    <property type="pathway name" value="RHOH GTPase cycle"/>
</dbReference>
<dbReference type="Reactome" id="R-DDI-9013408">
    <property type="pathway name" value="RHOG GTPase cycle"/>
</dbReference>
<dbReference type="Reactome" id="R-DDI-9013418">
    <property type="pathway name" value="RHOBTB2 GTPase cycle"/>
</dbReference>
<dbReference type="Reactome" id="R-DDI-9013422">
    <property type="pathway name" value="RHOBTB1 GTPase cycle"/>
</dbReference>
<dbReference type="PRO" id="PR:P34148"/>
<dbReference type="Proteomes" id="UP000002195">
    <property type="component" value="Chromosome 3"/>
</dbReference>
<dbReference type="GO" id="GO:0042995">
    <property type="term" value="C:cell projection"/>
    <property type="evidence" value="ECO:0000318"/>
    <property type="project" value="GO_Central"/>
</dbReference>
<dbReference type="GO" id="GO:0005737">
    <property type="term" value="C:cytoplasm"/>
    <property type="evidence" value="ECO:0000314"/>
    <property type="project" value="dictyBase"/>
</dbReference>
<dbReference type="GO" id="GO:0031410">
    <property type="term" value="C:cytoplasmic vesicle"/>
    <property type="evidence" value="ECO:0000318"/>
    <property type="project" value="GO_Central"/>
</dbReference>
<dbReference type="GO" id="GO:0005856">
    <property type="term" value="C:cytoskeleton"/>
    <property type="evidence" value="ECO:0000318"/>
    <property type="project" value="GO_Central"/>
</dbReference>
<dbReference type="GO" id="GO:0005811">
    <property type="term" value="C:lipid droplet"/>
    <property type="evidence" value="ECO:0007005"/>
    <property type="project" value="dictyBase"/>
</dbReference>
<dbReference type="GO" id="GO:0005886">
    <property type="term" value="C:plasma membrane"/>
    <property type="evidence" value="ECO:0000318"/>
    <property type="project" value="GO_Central"/>
</dbReference>
<dbReference type="GO" id="GO:0005525">
    <property type="term" value="F:GTP binding"/>
    <property type="evidence" value="ECO:0000318"/>
    <property type="project" value="GO_Central"/>
</dbReference>
<dbReference type="GO" id="GO:0003924">
    <property type="term" value="F:GTPase activity"/>
    <property type="evidence" value="ECO:0000318"/>
    <property type="project" value="GO_Central"/>
</dbReference>
<dbReference type="GO" id="GO:0019901">
    <property type="term" value="F:protein kinase binding"/>
    <property type="evidence" value="ECO:0000318"/>
    <property type="project" value="GO_Central"/>
</dbReference>
<dbReference type="GO" id="GO:0007015">
    <property type="term" value="P:actin filament organization"/>
    <property type="evidence" value="ECO:0000318"/>
    <property type="project" value="GO_Central"/>
</dbReference>
<dbReference type="GO" id="GO:0030041">
    <property type="term" value="P:actin filament polymerization"/>
    <property type="evidence" value="ECO:0000315"/>
    <property type="project" value="dictyBase"/>
</dbReference>
<dbReference type="GO" id="GO:0031152">
    <property type="term" value="P:aggregation involved in sorocarp development"/>
    <property type="evidence" value="ECO:0000315"/>
    <property type="project" value="dictyBase"/>
</dbReference>
<dbReference type="GO" id="GO:0006935">
    <property type="term" value="P:chemotaxis"/>
    <property type="evidence" value="ECO:0000315"/>
    <property type="project" value="dictyBase"/>
</dbReference>
<dbReference type="GO" id="GO:0030865">
    <property type="term" value="P:cortical cytoskeleton organization"/>
    <property type="evidence" value="ECO:0000318"/>
    <property type="project" value="GO_Central"/>
</dbReference>
<dbReference type="GO" id="GO:0007163">
    <property type="term" value="P:establishment or maintenance of cell polarity"/>
    <property type="evidence" value="ECO:0000318"/>
    <property type="project" value="GO_Central"/>
</dbReference>
<dbReference type="GO" id="GO:0044351">
    <property type="term" value="P:macropinocytosis"/>
    <property type="evidence" value="ECO:0000315"/>
    <property type="project" value="dictyBase"/>
</dbReference>
<dbReference type="GO" id="GO:0032956">
    <property type="term" value="P:regulation of actin cytoskeleton organization"/>
    <property type="evidence" value="ECO:0000315"/>
    <property type="project" value="dictyBase"/>
</dbReference>
<dbReference type="GO" id="GO:0008360">
    <property type="term" value="P:regulation of cell shape"/>
    <property type="evidence" value="ECO:0000318"/>
    <property type="project" value="GO_Central"/>
</dbReference>
<dbReference type="GO" id="GO:0007165">
    <property type="term" value="P:signal transduction"/>
    <property type="evidence" value="ECO:0000318"/>
    <property type="project" value="GO_Central"/>
</dbReference>
<dbReference type="GO" id="GO:0007264">
    <property type="term" value="P:small GTPase-mediated signal transduction"/>
    <property type="evidence" value="ECO:0007669"/>
    <property type="project" value="InterPro"/>
</dbReference>
<dbReference type="CDD" id="cd00157">
    <property type="entry name" value="Rho"/>
    <property type="match status" value="1"/>
</dbReference>
<dbReference type="FunFam" id="3.40.50.300:FF:000088">
    <property type="entry name" value="Ras-related C3 botulinum toxin substrate 1"/>
    <property type="match status" value="1"/>
</dbReference>
<dbReference type="Gene3D" id="3.40.50.300">
    <property type="entry name" value="P-loop containing nucleotide triphosphate hydrolases"/>
    <property type="match status" value="1"/>
</dbReference>
<dbReference type="InterPro" id="IPR027417">
    <property type="entry name" value="P-loop_NTPase"/>
</dbReference>
<dbReference type="InterPro" id="IPR005225">
    <property type="entry name" value="Small_GTP-bd"/>
</dbReference>
<dbReference type="InterPro" id="IPR001806">
    <property type="entry name" value="Small_GTPase"/>
</dbReference>
<dbReference type="InterPro" id="IPR003578">
    <property type="entry name" value="Small_GTPase_Rho"/>
</dbReference>
<dbReference type="NCBIfam" id="TIGR00231">
    <property type="entry name" value="small_GTP"/>
    <property type="match status" value="1"/>
</dbReference>
<dbReference type="PANTHER" id="PTHR24072">
    <property type="entry name" value="RHO FAMILY GTPASE"/>
    <property type="match status" value="1"/>
</dbReference>
<dbReference type="Pfam" id="PF00071">
    <property type="entry name" value="Ras"/>
    <property type="match status" value="1"/>
</dbReference>
<dbReference type="PRINTS" id="PR00449">
    <property type="entry name" value="RASTRNSFRMNG"/>
</dbReference>
<dbReference type="SMART" id="SM00175">
    <property type="entry name" value="RAB"/>
    <property type="match status" value="1"/>
</dbReference>
<dbReference type="SMART" id="SM00176">
    <property type="entry name" value="RAN"/>
    <property type="match status" value="1"/>
</dbReference>
<dbReference type="SMART" id="SM00173">
    <property type="entry name" value="RAS"/>
    <property type="match status" value="1"/>
</dbReference>
<dbReference type="SMART" id="SM00174">
    <property type="entry name" value="RHO"/>
    <property type="match status" value="1"/>
</dbReference>
<dbReference type="SUPFAM" id="SSF52540">
    <property type="entry name" value="P-loop containing nucleoside triphosphate hydrolases"/>
    <property type="match status" value="1"/>
</dbReference>
<dbReference type="PROSITE" id="PS51420">
    <property type="entry name" value="RHO"/>
    <property type="match status" value="1"/>
</dbReference>
<proteinExistence type="evidence at protein level"/>
<organism>
    <name type="scientific">Dictyostelium discoideum</name>
    <name type="common">Social amoeba</name>
    <dbReference type="NCBI Taxonomy" id="44689"/>
    <lineage>
        <taxon>Eukaryota</taxon>
        <taxon>Amoebozoa</taxon>
        <taxon>Evosea</taxon>
        <taxon>Eumycetozoa</taxon>
        <taxon>Dictyostelia</taxon>
        <taxon>Dictyosteliales</taxon>
        <taxon>Dictyosteliaceae</taxon>
        <taxon>Dictyostelium</taxon>
    </lineage>
</organism>
<accession>P34148</accession>
<accession>Q54WH8</accession>
<accession>Q9GPT2</accession>